<proteinExistence type="inferred from homology"/>
<name>DAPA_PROMT</name>
<dbReference type="EC" id="4.3.3.7" evidence="1"/>
<dbReference type="EMBL" id="CP000095">
    <property type="protein sequence ID" value="AAZ58741.1"/>
    <property type="molecule type" value="Genomic_DNA"/>
</dbReference>
<dbReference type="RefSeq" id="WP_011295595.1">
    <property type="nucleotide sequence ID" value="NC_007335.2"/>
</dbReference>
<dbReference type="SMR" id="Q46ID7"/>
<dbReference type="STRING" id="59920.PMN2A_1251"/>
<dbReference type="KEGG" id="pmn:PMN2A_1251"/>
<dbReference type="HOGENOM" id="CLU_049343_7_1_3"/>
<dbReference type="OrthoDB" id="9782828at2"/>
<dbReference type="PhylomeDB" id="Q46ID7"/>
<dbReference type="UniPathway" id="UPA00034">
    <property type="reaction ID" value="UER00017"/>
</dbReference>
<dbReference type="Proteomes" id="UP000002535">
    <property type="component" value="Chromosome"/>
</dbReference>
<dbReference type="GO" id="GO:0005829">
    <property type="term" value="C:cytosol"/>
    <property type="evidence" value="ECO:0007669"/>
    <property type="project" value="TreeGrafter"/>
</dbReference>
<dbReference type="GO" id="GO:0008840">
    <property type="term" value="F:4-hydroxy-tetrahydrodipicolinate synthase activity"/>
    <property type="evidence" value="ECO:0007669"/>
    <property type="project" value="UniProtKB-UniRule"/>
</dbReference>
<dbReference type="GO" id="GO:0019877">
    <property type="term" value="P:diaminopimelate biosynthetic process"/>
    <property type="evidence" value="ECO:0007669"/>
    <property type="project" value="UniProtKB-UniRule"/>
</dbReference>
<dbReference type="GO" id="GO:0009089">
    <property type="term" value="P:lysine biosynthetic process via diaminopimelate"/>
    <property type="evidence" value="ECO:0007669"/>
    <property type="project" value="UniProtKB-UniRule"/>
</dbReference>
<dbReference type="CDD" id="cd00950">
    <property type="entry name" value="DHDPS"/>
    <property type="match status" value="1"/>
</dbReference>
<dbReference type="Gene3D" id="3.20.20.70">
    <property type="entry name" value="Aldolase class I"/>
    <property type="match status" value="1"/>
</dbReference>
<dbReference type="HAMAP" id="MF_00418">
    <property type="entry name" value="DapA"/>
    <property type="match status" value="1"/>
</dbReference>
<dbReference type="InterPro" id="IPR013785">
    <property type="entry name" value="Aldolase_TIM"/>
</dbReference>
<dbReference type="InterPro" id="IPR005263">
    <property type="entry name" value="DapA"/>
</dbReference>
<dbReference type="InterPro" id="IPR002220">
    <property type="entry name" value="DapA-like"/>
</dbReference>
<dbReference type="InterPro" id="IPR020625">
    <property type="entry name" value="Schiff_base-form_aldolases_AS"/>
</dbReference>
<dbReference type="InterPro" id="IPR020624">
    <property type="entry name" value="Schiff_base-form_aldolases_CS"/>
</dbReference>
<dbReference type="NCBIfam" id="TIGR00674">
    <property type="entry name" value="dapA"/>
    <property type="match status" value="1"/>
</dbReference>
<dbReference type="PANTHER" id="PTHR12128:SF66">
    <property type="entry name" value="4-HYDROXY-2-OXOGLUTARATE ALDOLASE, MITOCHONDRIAL"/>
    <property type="match status" value="1"/>
</dbReference>
<dbReference type="PANTHER" id="PTHR12128">
    <property type="entry name" value="DIHYDRODIPICOLINATE SYNTHASE"/>
    <property type="match status" value="1"/>
</dbReference>
<dbReference type="Pfam" id="PF00701">
    <property type="entry name" value="DHDPS"/>
    <property type="match status" value="1"/>
</dbReference>
<dbReference type="PIRSF" id="PIRSF001365">
    <property type="entry name" value="DHDPS"/>
    <property type="match status" value="1"/>
</dbReference>
<dbReference type="PRINTS" id="PR00146">
    <property type="entry name" value="DHPICSNTHASE"/>
</dbReference>
<dbReference type="SMART" id="SM01130">
    <property type="entry name" value="DHDPS"/>
    <property type="match status" value="1"/>
</dbReference>
<dbReference type="SUPFAM" id="SSF51569">
    <property type="entry name" value="Aldolase"/>
    <property type="match status" value="1"/>
</dbReference>
<dbReference type="PROSITE" id="PS00665">
    <property type="entry name" value="DHDPS_1"/>
    <property type="match status" value="1"/>
</dbReference>
<dbReference type="PROSITE" id="PS00666">
    <property type="entry name" value="DHDPS_2"/>
    <property type="match status" value="1"/>
</dbReference>
<feature type="chain" id="PRO_1000050245" description="4-hydroxy-tetrahydrodipicolinate synthase">
    <location>
        <begin position="1"/>
        <end position="302"/>
    </location>
</feature>
<feature type="active site" description="Proton donor/acceptor" evidence="1">
    <location>
        <position position="144"/>
    </location>
</feature>
<feature type="active site" description="Schiff-base intermediate with substrate" evidence="1">
    <location>
        <position position="172"/>
    </location>
</feature>
<feature type="binding site" evidence="1">
    <location>
        <position position="55"/>
    </location>
    <ligand>
        <name>pyruvate</name>
        <dbReference type="ChEBI" id="CHEBI:15361"/>
    </ligand>
</feature>
<feature type="binding site" evidence="1">
    <location>
        <position position="214"/>
    </location>
    <ligand>
        <name>pyruvate</name>
        <dbReference type="ChEBI" id="CHEBI:15361"/>
    </ligand>
</feature>
<feature type="site" description="Part of a proton relay during catalysis" evidence="1">
    <location>
        <position position="54"/>
    </location>
</feature>
<feature type="site" description="Part of a proton relay during catalysis" evidence="1">
    <location>
        <position position="117"/>
    </location>
</feature>
<accession>Q46ID7</accession>
<organism>
    <name type="scientific">Prochlorococcus marinus (strain NATL2A)</name>
    <dbReference type="NCBI Taxonomy" id="59920"/>
    <lineage>
        <taxon>Bacteria</taxon>
        <taxon>Bacillati</taxon>
        <taxon>Cyanobacteriota</taxon>
        <taxon>Cyanophyceae</taxon>
        <taxon>Synechococcales</taxon>
        <taxon>Prochlorococcaceae</taxon>
        <taxon>Prochlorococcus</taxon>
    </lineage>
</organism>
<protein>
    <recommendedName>
        <fullName evidence="1">4-hydroxy-tetrahydrodipicolinate synthase</fullName>
        <shortName evidence="1">HTPA synthase</shortName>
        <ecNumber evidence="1">4.3.3.7</ecNumber>
    </recommendedName>
</protein>
<evidence type="ECO:0000255" key="1">
    <source>
        <dbReference type="HAMAP-Rule" id="MF_00418"/>
    </source>
</evidence>
<evidence type="ECO:0000305" key="2"/>
<comment type="function">
    <text evidence="1">Catalyzes the condensation of (S)-aspartate-beta-semialdehyde [(S)-ASA] and pyruvate to 4-hydroxy-tetrahydrodipicolinate (HTPA).</text>
</comment>
<comment type="catalytic activity">
    <reaction evidence="1">
        <text>L-aspartate 4-semialdehyde + pyruvate = (2S,4S)-4-hydroxy-2,3,4,5-tetrahydrodipicolinate + H2O + H(+)</text>
        <dbReference type="Rhea" id="RHEA:34171"/>
        <dbReference type="ChEBI" id="CHEBI:15361"/>
        <dbReference type="ChEBI" id="CHEBI:15377"/>
        <dbReference type="ChEBI" id="CHEBI:15378"/>
        <dbReference type="ChEBI" id="CHEBI:67139"/>
        <dbReference type="ChEBI" id="CHEBI:537519"/>
        <dbReference type="EC" id="4.3.3.7"/>
    </reaction>
</comment>
<comment type="pathway">
    <text evidence="1">Amino-acid biosynthesis; L-lysine biosynthesis via DAP pathway; (S)-tetrahydrodipicolinate from L-aspartate: step 3/4.</text>
</comment>
<comment type="subunit">
    <text evidence="1">Homotetramer; dimer of dimers.</text>
</comment>
<comment type="subcellular location">
    <subcellularLocation>
        <location evidence="1">Cytoplasm</location>
    </subcellularLocation>
</comment>
<comment type="similarity">
    <text evidence="1">Belongs to the DapA family.</text>
</comment>
<comment type="caution">
    <text evidence="2">Was originally thought to be a dihydrodipicolinate synthase (DHDPS), catalyzing the condensation of (S)-aspartate-beta-semialdehyde [(S)-ASA] and pyruvate to dihydrodipicolinate (DHDP). However, it was shown in E.coli that the product of the enzymatic reaction is not dihydrodipicolinate but in fact (4S)-4-hydroxy-2,3,4,5-tetrahydro-(2S)-dipicolinic acid (HTPA), and that the consecutive dehydration reaction leading to DHDP is not spontaneous but catalyzed by DapB.</text>
</comment>
<sequence>MNKSALLSPAPFGRLLTAMVTPFDDEGKVDYGLAADLANYLVDQGSDGIVVCGTTGESPTLSWQEQQKLLETVRNSLGSRAKVLAGTGSNSTSEAIEATKEAANSGADGALVVVPYYNKPPQEGLEVHFRAIANAAPKLPLMLYNIPGRTGCSISPSIVSKLMDCSNVVSFKAASGTTEEVTQLRNYCGSDLAIYSGDDALVLPMLSVGAVGVVSVASHLVAPNLKKLIESFLEGKYSEALYLHETLQPLFKSLFATTNPIPVKAALQLIGWSVGPPRSPLVSLNSEMKEELVKILSSLRLI</sequence>
<gene>
    <name evidence="1" type="primary">dapA</name>
    <name type="ordered locus">PMN2A_1251</name>
</gene>
<reference key="1">
    <citation type="journal article" date="2007" name="PLoS Genet.">
        <title>Patterns and implications of gene gain and loss in the evolution of Prochlorococcus.</title>
        <authorList>
            <person name="Kettler G.C."/>
            <person name="Martiny A.C."/>
            <person name="Huang K."/>
            <person name="Zucker J."/>
            <person name="Coleman M.L."/>
            <person name="Rodrigue S."/>
            <person name="Chen F."/>
            <person name="Lapidus A."/>
            <person name="Ferriera S."/>
            <person name="Johnson J."/>
            <person name="Steglich C."/>
            <person name="Church G.M."/>
            <person name="Richardson P."/>
            <person name="Chisholm S.W."/>
        </authorList>
    </citation>
    <scope>NUCLEOTIDE SEQUENCE [LARGE SCALE GENOMIC DNA]</scope>
    <source>
        <strain>NATL2A</strain>
    </source>
</reference>
<keyword id="KW-0028">Amino-acid biosynthesis</keyword>
<keyword id="KW-0963">Cytoplasm</keyword>
<keyword id="KW-0220">Diaminopimelate biosynthesis</keyword>
<keyword id="KW-0456">Lyase</keyword>
<keyword id="KW-0457">Lysine biosynthesis</keyword>
<keyword id="KW-1185">Reference proteome</keyword>
<keyword id="KW-0704">Schiff base</keyword>